<reference key="1">
    <citation type="journal article" date="2007" name="Nature">
        <title>Evolution of genes and genomes on the Drosophila phylogeny.</title>
        <authorList>
            <consortium name="Drosophila 12 genomes consortium"/>
        </authorList>
    </citation>
    <scope>NUCLEOTIDE SEQUENCE [LARGE SCALE GENOMIC DNA]</scope>
    <source>
        <strain>Tucson 14024-0371.13</strain>
    </source>
</reference>
<keyword id="KW-0131">Cell cycle</keyword>
<keyword id="KW-0132">Cell division</keyword>
<keyword id="KW-0159">Chromosome partition</keyword>
<keyword id="KW-0498">Mitosis</keyword>
<keyword id="KW-0539">Nucleus</keyword>
<keyword id="KW-1185">Reference proteome</keyword>
<keyword id="KW-0677">Repeat</keyword>
<keyword id="KW-0802">TPR repeat</keyword>
<name>SCC4_DROAN</name>
<comment type="function">
    <text evidence="1">Required for association of the cohesin complex with chromatin during interphase. Plays a role in sister chromatid cohesion and normal progression through prometaphase (By similarity).</text>
</comment>
<comment type="subunit">
    <text evidence="1">Interacts with Nipped-B to form the cohesin loading complex.</text>
</comment>
<comment type="subcellular location">
    <subcellularLocation>
        <location evidence="1">Nucleus</location>
        <location evidence="1">Nucleoplasm</location>
    </subcellularLocation>
    <text evidence="1">Binds to chromatin from the end of mitosis until prophase.</text>
</comment>
<comment type="similarity">
    <text evidence="2">Belongs to the SCC4/mau-2 family.</text>
</comment>
<gene>
    <name type="ORF">GF17837</name>
</gene>
<dbReference type="EMBL" id="CH902617">
    <property type="protein sequence ID" value="EDV42144.1"/>
    <property type="molecule type" value="Genomic_DNA"/>
</dbReference>
<dbReference type="FunCoup" id="B3M1B7">
    <property type="interactions" value="2789"/>
</dbReference>
<dbReference type="STRING" id="7217.B3M1B7"/>
<dbReference type="EnsemblMetazoa" id="FBtr0122537">
    <property type="protein sequence ID" value="FBpp0121029"/>
    <property type="gene ID" value="FBgn0094855"/>
</dbReference>
<dbReference type="EnsemblMetazoa" id="XM_001953547.4">
    <property type="protein sequence ID" value="XP_001953583.1"/>
    <property type="gene ID" value="LOC6500620"/>
</dbReference>
<dbReference type="GeneID" id="6500620"/>
<dbReference type="KEGG" id="dan:6500620"/>
<dbReference type="CTD" id="23383"/>
<dbReference type="eggNOG" id="KOG2300">
    <property type="taxonomic scope" value="Eukaryota"/>
</dbReference>
<dbReference type="HOGENOM" id="CLU_030238_0_0_1"/>
<dbReference type="InParanoid" id="B3M1B7"/>
<dbReference type="OMA" id="QDAWYLS"/>
<dbReference type="OrthoDB" id="5565328at2759"/>
<dbReference type="PhylomeDB" id="B3M1B7"/>
<dbReference type="Proteomes" id="UP000007801">
    <property type="component" value="Unassembled WGS sequence"/>
</dbReference>
<dbReference type="GO" id="GO:0000785">
    <property type="term" value="C:chromatin"/>
    <property type="evidence" value="ECO:0000250"/>
    <property type="project" value="UniProtKB"/>
</dbReference>
<dbReference type="GO" id="GO:0005654">
    <property type="term" value="C:nucleoplasm"/>
    <property type="evidence" value="ECO:0000250"/>
    <property type="project" value="UniProtKB"/>
</dbReference>
<dbReference type="GO" id="GO:0005634">
    <property type="term" value="C:nucleus"/>
    <property type="evidence" value="ECO:0000250"/>
    <property type="project" value="UniProtKB"/>
</dbReference>
<dbReference type="GO" id="GO:0032116">
    <property type="term" value="C:SMC loading complex"/>
    <property type="evidence" value="ECO:0000250"/>
    <property type="project" value="UniProtKB"/>
</dbReference>
<dbReference type="GO" id="GO:0051301">
    <property type="term" value="P:cell division"/>
    <property type="evidence" value="ECO:0007669"/>
    <property type="project" value="UniProtKB-KW"/>
</dbReference>
<dbReference type="GO" id="GO:0007059">
    <property type="term" value="P:chromosome segregation"/>
    <property type="evidence" value="ECO:0007669"/>
    <property type="project" value="UniProtKB-KW"/>
</dbReference>
<dbReference type="GO" id="GO:0034088">
    <property type="term" value="P:maintenance of mitotic sister chromatid cohesion"/>
    <property type="evidence" value="ECO:0000250"/>
    <property type="project" value="UniProtKB"/>
</dbReference>
<dbReference type="FunFam" id="1.25.40.10:FF:000373">
    <property type="entry name" value="MAU2 chromatid cohesion factor homolog"/>
    <property type="match status" value="1"/>
</dbReference>
<dbReference type="FunFam" id="1.25.40.10:FF:000915">
    <property type="entry name" value="MAU2 chromatid cohesion factor homolog"/>
    <property type="match status" value="1"/>
</dbReference>
<dbReference type="Gene3D" id="1.25.40.10">
    <property type="entry name" value="Tetratricopeptide repeat domain"/>
    <property type="match status" value="2"/>
</dbReference>
<dbReference type="InterPro" id="IPR019440">
    <property type="entry name" value="MAU2"/>
</dbReference>
<dbReference type="InterPro" id="IPR011990">
    <property type="entry name" value="TPR-like_helical_dom_sf"/>
</dbReference>
<dbReference type="PANTHER" id="PTHR21394">
    <property type="entry name" value="MAU2 CHROMATID COHESION FACTOR HOMOLOG"/>
    <property type="match status" value="1"/>
</dbReference>
<dbReference type="Pfam" id="PF10345">
    <property type="entry name" value="Cohesin_load"/>
    <property type="match status" value="1"/>
</dbReference>
<dbReference type="SUPFAM" id="SSF48452">
    <property type="entry name" value="TPR-like"/>
    <property type="match status" value="1"/>
</dbReference>
<organism>
    <name type="scientific">Drosophila ananassae</name>
    <name type="common">Fruit fly</name>
    <dbReference type="NCBI Taxonomy" id="7217"/>
    <lineage>
        <taxon>Eukaryota</taxon>
        <taxon>Metazoa</taxon>
        <taxon>Ecdysozoa</taxon>
        <taxon>Arthropoda</taxon>
        <taxon>Hexapoda</taxon>
        <taxon>Insecta</taxon>
        <taxon>Pterygota</taxon>
        <taxon>Neoptera</taxon>
        <taxon>Endopterygota</taxon>
        <taxon>Diptera</taxon>
        <taxon>Brachycera</taxon>
        <taxon>Muscomorpha</taxon>
        <taxon>Ephydroidea</taxon>
        <taxon>Drosophilidae</taxon>
        <taxon>Drosophila</taxon>
        <taxon>Sophophora</taxon>
    </lineage>
</organism>
<feature type="chain" id="PRO_0000382729" description="MAU2 chromatid cohesion factor homolog">
    <location>
        <begin position="1"/>
        <end position="639"/>
    </location>
</feature>
<feature type="repeat" description="TPR 1">
    <location>
        <begin position="453"/>
        <end position="486"/>
    </location>
</feature>
<feature type="repeat" description="TPR 2">
    <location>
        <begin position="493"/>
        <end position="526"/>
    </location>
</feature>
<proteinExistence type="inferred from homology"/>
<accession>B3M1B7</accession>
<protein>
    <recommendedName>
        <fullName>MAU2 chromatid cohesion factor homolog</fullName>
    </recommendedName>
    <alternativeName>
        <fullName>Cohesin loading complex subunit SCC4 homolog</fullName>
    </alternativeName>
</protein>
<sequence length="639" mass="71840">MSASTSTTAAASQDACYISLLGLAEYFRTSQPPNIKKCIQCLQALFTFMPPSKVEARTHLQMGQILMAYTQNIDLARHHLEKAWSISEPLANFDVKFDTASLLAQLHLQTDQNSNQAKAMLRRAVELSQHNVYWHCKLLLQLAQIHASDREYSLASDLLAVGAENADEAGATYLKVLFLLSRAMILMIERKTNDVLALLNSAGQIIDNNIPNPHQKEYLKVFFLVLQVCYYLALGQVKTVKPSLKQLQMSIQTIMAPNWPSDETIFGANQLEMFVWLPKEQLYVLVYLVTVSHSMMAGYMDKAQKYTEKALTQIEKLKQQEDKPILSVFKVILLEHIVMCRMVMGNRELAIREIAAARDVCLAAPQRSLLRRHSAQLHCLIGLYSMSTSFFEHAERQFLVCVSETNERDLKLFANLNLAIIYLRTKRDTDLKQILDAVSSENTNTYSSQALMGGFYYVQGLHAFHKNSFHEAKRFLRETLKMANAEDLNRLTSCSLVLLSHVFLSIGNSKESMNMVTPAMQLASKIPDIHVQLWGSAILKDLHRMSKDAQHEKDAYANHLKYSENLIADQRKSVQSSHHELVNWFHGDPPVTSGPPTTTAVAMILPDSSAAVGPVPVIASTSTGMQQAIQPVGQYGQFY</sequence>
<evidence type="ECO:0000250" key="1"/>
<evidence type="ECO:0000305" key="2"/>